<accession>Q82VC2</accession>
<comment type="function">
    <text evidence="1">Bidirectionally degrades single-stranded DNA into large acid-insoluble oligonucleotides, which are then degraded further into small acid-soluble oligonucleotides.</text>
</comment>
<comment type="catalytic activity">
    <reaction evidence="1">
        <text>Exonucleolytic cleavage in either 5'- to 3'- or 3'- to 5'-direction to yield nucleoside 5'-phosphates.</text>
        <dbReference type="EC" id="3.1.11.6"/>
    </reaction>
</comment>
<comment type="subunit">
    <text evidence="1">Heterooligomer composed of large and small subunits.</text>
</comment>
<comment type="subcellular location">
    <subcellularLocation>
        <location evidence="1">Cytoplasm</location>
    </subcellularLocation>
</comment>
<comment type="similarity">
    <text evidence="1">Belongs to the XseA family.</text>
</comment>
<evidence type="ECO:0000255" key="1">
    <source>
        <dbReference type="HAMAP-Rule" id="MF_00378"/>
    </source>
</evidence>
<keyword id="KW-0963">Cytoplasm</keyword>
<keyword id="KW-0269">Exonuclease</keyword>
<keyword id="KW-0378">Hydrolase</keyword>
<keyword id="KW-0540">Nuclease</keyword>
<keyword id="KW-1185">Reference proteome</keyword>
<gene>
    <name evidence="1" type="primary">xseA</name>
    <name type="ordered locus">NE1172</name>
</gene>
<protein>
    <recommendedName>
        <fullName evidence="1">Exodeoxyribonuclease 7 large subunit</fullName>
        <ecNumber evidence="1">3.1.11.6</ecNumber>
    </recommendedName>
    <alternativeName>
        <fullName evidence="1">Exodeoxyribonuclease VII large subunit</fullName>
        <shortName evidence="1">Exonuclease VII large subunit</shortName>
    </alternativeName>
</protein>
<organism>
    <name type="scientific">Nitrosomonas europaea (strain ATCC 19718 / CIP 103999 / KCTC 2705 / NBRC 14298)</name>
    <dbReference type="NCBI Taxonomy" id="228410"/>
    <lineage>
        <taxon>Bacteria</taxon>
        <taxon>Pseudomonadati</taxon>
        <taxon>Pseudomonadota</taxon>
        <taxon>Betaproteobacteria</taxon>
        <taxon>Nitrosomonadales</taxon>
        <taxon>Nitrosomonadaceae</taxon>
        <taxon>Nitrosomonas</taxon>
    </lineage>
</organism>
<feature type="chain" id="PRO_1000060030" description="Exodeoxyribonuclease 7 large subunit">
    <location>
        <begin position="1"/>
        <end position="448"/>
    </location>
</feature>
<sequence>MTDHNLLPEPKKILWRVSELNRNARVILEQTFPLLWVSGEISNLKRYPSGHWYFSLKDDSAQVRCVMFRHKNLYLDWIPQEGMQVEAQALVTLYEARGEFQLTVEQLRRAGLGALFEAFERLKARLQQEGLFSPEYKQPLPRFPRQIGIITSPNTAALRDVLTTLQLRLPSIPVVIYPAPVQGEGSAAAITTALHTAAVRGECDVLILCRGGGSIEDLWAFNEEIVARAIAACPIPIVTGIGHETDFTIADFVADARAPTPTGAAQLASPDRQAILHRLQYWLHRLQQTMERHIERRMQATDLLAHRLIHPGERIRHQQMHLLQLRGRLQNAWNRQVEIRTWRIEETGRRIHSAKPDIQAGIRHQQELAARLQRAMAHRLENLQFKLRQQQQHLIHLDPKAVLARGYSIAYTARGDILHDSRQTRAGDNVRLVFASGWAKADITETGE</sequence>
<name>EX7L_NITEU</name>
<dbReference type="EC" id="3.1.11.6" evidence="1"/>
<dbReference type="EMBL" id="AL954747">
    <property type="protein sequence ID" value="CAD85083.1"/>
    <property type="molecule type" value="Genomic_DNA"/>
</dbReference>
<dbReference type="RefSeq" id="WP_011111763.1">
    <property type="nucleotide sequence ID" value="NC_004757.1"/>
</dbReference>
<dbReference type="SMR" id="Q82VC2"/>
<dbReference type="STRING" id="228410.NE1172"/>
<dbReference type="GeneID" id="87104352"/>
<dbReference type="KEGG" id="neu:NE1172"/>
<dbReference type="eggNOG" id="COG1570">
    <property type="taxonomic scope" value="Bacteria"/>
</dbReference>
<dbReference type="HOGENOM" id="CLU_023625_3_1_4"/>
<dbReference type="OrthoDB" id="9802795at2"/>
<dbReference type="PhylomeDB" id="Q82VC2"/>
<dbReference type="Proteomes" id="UP000001416">
    <property type="component" value="Chromosome"/>
</dbReference>
<dbReference type="GO" id="GO:0005737">
    <property type="term" value="C:cytoplasm"/>
    <property type="evidence" value="ECO:0007669"/>
    <property type="project" value="UniProtKB-SubCell"/>
</dbReference>
<dbReference type="GO" id="GO:0009318">
    <property type="term" value="C:exodeoxyribonuclease VII complex"/>
    <property type="evidence" value="ECO:0007669"/>
    <property type="project" value="InterPro"/>
</dbReference>
<dbReference type="GO" id="GO:0008855">
    <property type="term" value="F:exodeoxyribonuclease VII activity"/>
    <property type="evidence" value="ECO:0007669"/>
    <property type="project" value="UniProtKB-UniRule"/>
</dbReference>
<dbReference type="GO" id="GO:0003676">
    <property type="term" value="F:nucleic acid binding"/>
    <property type="evidence" value="ECO:0007669"/>
    <property type="project" value="InterPro"/>
</dbReference>
<dbReference type="GO" id="GO:0006308">
    <property type="term" value="P:DNA catabolic process"/>
    <property type="evidence" value="ECO:0007669"/>
    <property type="project" value="UniProtKB-UniRule"/>
</dbReference>
<dbReference type="CDD" id="cd04489">
    <property type="entry name" value="ExoVII_LU_OBF"/>
    <property type="match status" value="1"/>
</dbReference>
<dbReference type="HAMAP" id="MF_00378">
    <property type="entry name" value="Exonuc_7_L"/>
    <property type="match status" value="1"/>
</dbReference>
<dbReference type="InterPro" id="IPR003753">
    <property type="entry name" value="Exonuc_VII_L"/>
</dbReference>
<dbReference type="InterPro" id="IPR020579">
    <property type="entry name" value="Exonuc_VII_lsu_C"/>
</dbReference>
<dbReference type="InterPro" id="IPR025824">
    <property type="entry name" value="OB-fold_nuc-bd_dom"/>
</dbReference>
<dbReference type="NCBIfam" id="TIGR00237">
    <property type="entry name" value="xseA"/>
    <property type="match status" value="1"/>
</dbReference>
<dbReference type="PANTHER" id="PTHR30008">
    <property type="entry name" value="EXODEOXYRIBONUCLEASE 7 LARGE SUBUNIT"/>
    <property type="match status" value="1"/>
</dbReference>
<dbReference type="PANTHER" id="PTHR30008:SF0">
    <property type="entry name" value="EXODEOXYRIBONUCLEASE 7 LARGE SUBUNIT"/>
    <property type="match status" value="1"/>
</dbReference>
<dbReference type="Pfam" id="PF02601">
    <property type="entry name" value="Exonuc_VII_L"/>
    <property type="match status" value="1"/>
</dbReference>
<dbReference type="Pfam" id="PF13742">
    <property type="entry name" value="tRNA_anti_2"/>
    <property type="match status" value="1"/>
</dbReference>
<reference key="1">
    <citation type="journal article" date="2003" name="J. Bacteriol.">
        <title>Complete genome sequence of the ammonia-oxidizing bacterium and obligate chemolithoautotroph Nitrosomonas europaea.</title>
        <authorList>
            <person name="Chain P."/>
            <person name="Lamerdin J.E."/>
            <person name="Larimer F.W."/>
            <person name="Regala W."/>
            <person name="Lao V."/>
            <person name="Land M.L."/>
            <person name="Hauser L."/>
            <person name="Hooper A.B."/>
            <person name="Klotz M.G."/>
            <person name="Norton J."/>
            <person name="Sayavedra-Soto L.A."/>
            <person name="Arciero D.M."/>
            <person name="Hommes N.G."/>
            <person name="Whittaker M.M."/>
            <person name="Arp D.J."/>
        </authorList>
    </citation>
    <scope>NUCLEOTIDE SEQUENCE [LARGE SCALE GENOMIC DNA]</scope>
    <source>
        <strain>ATCC 19718 / CIP 103999 / KCTC 2705 / NBRC 14298</strain>
    </source>
</reference>
<proteinExistence type="inferred from homology"/>